<sequence length="1756" mass="191681">MLSFSVVKSAGSAGNYYTDKDNYYVLGSMGERWAGQGAEQLGLQGSVDKDVFTRLLEGRLPDGADLSRMQDGSNKHRPGYDLTFSAPKSVSMMAMLGGDKRLIDAHNQAVDFAVRQVEALASTRVMTDGQSETVLTGNLVMALFNHDTSRDQDPQLHTHVVVANVTQHNGEWKTLSSDKVGKTGFSENVLANRIAFGKIYQSELRQRVEALGYETEVVGKHGMWEMPGVPVEAFSSRSQAIREAVGEDASLKSRDVAALDTRKSKHHVDPEVRMAEWMQTLKETGFDIRAYRDAADQRAEIRTQAPGPASQDGPDVQQAVTQAIAGLSERKVQFTYTDVLARTVGILPPENGVIERARAGIDEAISREQLIPLDREKGLFTSGIHVLDELSVRALSRDIMKQNRVTVHPEKSVPRTAGYSDAVSVLAQDRPSLAIVSGQGGAAGQRERVAELVMMAREQGREVQIIAADRRSQLNLKQDERLSGELITGRRQLQEGMVFTSGSTFIVDQGEKLSLKETLTLLDGAARHNVQVLITDSGQRTGTGSALMAMKDAGVNTYRWQGGEQRPATIISEPDRNVRYDRLAGDFAASVKAGEESVAQVSGVREQAILTQAIRSELKTQGVLGHPEVTMTALSPVWLDSRSRYLRDMYRPGMVMEQWNPETRSHDRYVIDRVTAQSHSLTLRDAQGETQVVRISSLDSSWSLFRPEKMPVADGERLRVTGKIPGLRVSGGDRLQVASVSEDAMTVVVPGRAEPATLPVADSPFTALKLENGWVETPGHSVSDSATVFASVTQMAMDNATLNGLARSGRDVRLYSSLDETRTAEKLARHPSFTVVSEQIKARAGETSLETAISLQKTGLHTPAQQAIHLALPVLESKNLAFSMVDLLTEAKSFAAEGTGFTELGGEINAQIKRGDLLYVDVAKGYGTGLLVSRASYEAEKSILRHILEGKEAVTPLMERVPGELMETLTSGPRAATRMILETSDRFTVVQGYAGVGKTTQFRAVMSAVNMLPASERPRVVGLGPTHRAVGEMRSAGVDAQTLASFLHDTQLQQRSGETPDFSNTLFLLDESSMVGNTDMARAYALIAAGGGRAVASGDTDQLQAIAPGQPFRLQQTRSAADVVIMKEIVRQTPELREAVYSLINRDVERALSGLESVKPSQVPRQEGAWAPEHSVTEFSHSQEAKLAEAQQKAMLKGETFPDVPMTLYEAIVRDYTGRTPEAREQTLIVTHLNEDRRVLNSMIHDAREKAGELGKEQVMVPVLNTANIRDGELRRLSTWENNPDALALVDSVYHRIAGISKDDGLITLEDAEGNTRLISPREAVAEGVTLYTPDKIRVGTGDRMRFTKSDRERGYVANSVWTVTAVSGDSVTLSDGQQTRVIRPGQERAEQHIDLAYAITAHGAQGASETFAIALEGTEGNRKLMAGFESAYVALSRMKQHVQVYTDNRQGWTDAINNAVQKGTAHDVLEPKPDREVMNAQRLFSTARELRDVAAGRAVLRQAGLAGGDSPARFIAPGRKYPQPYVALPAFDRNGKSAGIWLNPLTTDDGNGLRGFSGEGRVKGSGDAQFVALQGSRNGESLLADNMQDGVRIARDNPDSGVVVRIAGEGRPWNPGAITGGRVWGDIPDSSVQPGAGNGEPVTAEVLAQRQAEEAIRRETERRADEIVRKMAENKPDLPDGKTEQAVREIAGQERDRADITEREAALPESVLRESQREQEAVREVARENLLQERLQQIERDMVRDLQKEKTLGGD</sequence>
<evidence type="ECO:0000250" key="1"/>
<evidence type="ECO:0000255" key="2"/>
<evidence type="ECO:0000305" key="3"/>
<proteinExistence type="inferred from homology"/>
<gene>
    <name type="primary">traI</name>
</gene>
<protein>
    <recommendedName>
        <fullName>Multifunctional conjugation protein TraI</fullName>
    </recommendedName>
    <domain>
        <recommendedName>
            <fullName>DNA relaxase TraI</fullName>
            <ecNumber>5.6.2.1</ecNumber>
        </recommendedName>
        <alternativeName>
            <fullName>DNA nickase TraI</fullName>
        </alternativeName>
        <alternativeName>
            <fullName>Transesterase TraI</fullName>
        </alternativeName>
    </domain>
    <domain>
        <recommendedName>
            <fullName>DNA helicase I</fullName>
            <ecNumber>3.6.4.12</ecNumber>
        </recommendedName>
    </domain>
</protein>
<accession>P22706</accession>
<accession>Q51812</accession>
<keyword id="KW-0067">ATP-binding</keyword>
<keyword id="KW-0175">Coiled coil</keyword>
<keyword id="KW-0184">Conjugation</keyword>
<keyword id="KW-0963">Cytoplasm</keyword>
<keyword id="KW-0238">DNA-binding</keyword>
<keyword id="KW-0347">Helicase</keyword>
<keyword id="KW-0378">Hydrolase</keyword>
<keyword id="KW-0413">Isomerase</keyword>
<keyword id="KW-0460">Magnesium</keyword>
<keyword id="KW-0479">Metal-binding</keyword>
<keyword id="KW-0499">Mobility protein</keyword>
<keyword id="KW-0511">Multifunctional enzyme</keyword>
<keyword id="KW-0547">Nucleotide-binding</keyword>
<keyword id="KW-0614">Plasmid</keyword>
<name>TRAI2_ECOLX</name>
<geneLocation type="plasmid">
    <name>IncFII R100</name>
    <name>NR1</name>
</geneLocation>
<geneLocation type="plasmid">
    <name>F</name>
</geneLocation>
<geneLocation type="plasmid">
    <name>R6-5</name>
</geneLocation>
<reference key="1">
    <citation type="journal article" date="1990" name="J. Mol. Biol.">
        <title>Nucleotide sequence of the promoter-distal region of the tra operon of plasmid R100, including traI (DNA helicase I) and traD genes.</title>
        <authorList>
            <person name="Yoshioka Y."/>
            <person name="Fujita Y."/>
            <person name="Ohtsubo E."/>
        </authorList>
    </citation>
    <scope>NUCLEOTIDE SEQUENCE [GENOMIC DNA]</scope>
    <source>
        <plasmid>IncFII R100 (NR1)</plasmid>
    </source>
</reference>
<reference key="2">
    <citation type="journal article" date="1991" name="Gene">
        <title>Sequence and conservation of genes at the distal end of the transfer region on plasmids F and R6-5.</title>
        <authorList>
            <person name="Cram D.S."/>
            <person name="Loh S.M."/>
            <person name="Cheah K.C."/>
            <person name="Skurray R.A."/>
        </authorList>
    </citation>
    <scope>NUCLEOTIDE SEQUENCE [GENOMIC DNA] OF 1747-1756</scope>
    <source>
        <plasmid>F</plasmid>
        <plasmid>R6-5</plasmid>
    </source>
</reference>
<organism>
    <name type="scientific">Escherichia coli</name>
    <dbReference type="NCBI Taxonomy" id="562"/>
    <lineage>
        <taxon>Bacteria</taxon>
        <taxon>Pseudomonadati</taxon>
        <taxon>Pseudomonadota</taxon>
        <taxon>Gammaproteobacteria</taxon>
        <taxon>Enterobacterales</taxon>
        <taxon>Enterobacteriaceae</taxon>
        <taxon>Escherichia</taxon>
    </lineage>
</organism>
<feature type="chain" id="PRO_0000068453" description="Multifunctional conjugation protein TraI">
    <location>
        <begin position="1"/>
        <end position="1756"/>
    </location>
</feature>
<feature type="region of interest" description="DNA relaxase">
    <location>
        <begin position="1"/>
        <end position="330"/>
    </location>
</feature>
<feature type="region of interest" description="DNA helicase I">
    <location>
        <begin position="950"/>
        <end position="1500"/>
    </location>
</feature>
<feature type="coiled-coil region" evidence="2">
    <location>
        <begin position="1719"/>
        <end position="1753"/>
    </location>
</feature>
<feature type="active site" description="O-(5'-phospho-DNA)-tyrosine intermediate; for relaxase activity" evidence="1">
    <location>
        <position position="16"/>
    </location>
</feature>
<feature type="active site" description="Relaxase" evidence="2">
    <location>
        <position position="17"/>
    </location>
</feature>
<feature type="binding site" evidence="1">
    <location>
        <position position="146"/>
    </location>
    <ligand>
        <name>Mg(2+)</name>
        <dbReference type="ChEBI" id="CHEBI:18420"/>
        <note>catalytic</note>
    </ligand>
</feature>
<feature type="binding site" evidence="1">
    <location>
        <position position="157"/>
    </location>
    <ligand>
        <name>Mg(2+)</name>
        <dbReference type="ChEBI" id="CHEBI:18420"/>
        <note>catalytic</note>
    </ligand>
</feature>
<feature type="binding site" evidence="1">
    <location>
        <position position="159"/>
    </location>
    <ligand>
        <name>Mg(2+)</name>
        <dbReference type="ChEBI" id="CHEBI:18420"/>
        <note>catalytic</note>
    </ligand>
</feature>
<feature type="binding site" evidence="2">
    <location>
        <begin position="992"/>
        <end position="999"/>
    </location>
    <ligand>
        <name>ATP</name>
        <dbReference type="ChEBI" id="CHEBI:30616"/>
    </ligand>
</feature>
<dbReference type="EC" id="5.6.2.1"/>
<dbReference type="EC" id="3.6.4.12"/>
<dbReference type="EMBL" id="X55815">
    <property type="protein sequence ID" value="CAA39337.1"/>
    <property type="molecule type" value="Genomic_DNA"/>
</dbReference>
<dbReference type="EMBL" id="M38047">
    <property type="protein sequence ID" value="AAA98090.1"/>
    <property type="molecule type" value="Genomic_DNA"/>
</dbReference>
<dbReference type="PIR" id="S10660">
    <property type="entry name" value="BVECAI"/>
</dbReference>
<dbReference type="SMR" id="P22706"/>
<dbReference type="GO" id="GO:0005737">
    <property type="term" value="C:cytoplasm"/>
    <property type="evidence" value="ECO:0007669"/>
    <property type="project" value="UniProtKB-SubCell"/>
</dbReference>
<dbReference type="GO" id="GO:0005524">
    <property type="term" value="F:ATP binding"/>
    <property type="evidence" value="ECO:0007669"/>
    <property type="project" value="UniProtKB-KW"/>
</dbReference>
<dbReference type="GO" id="GO:0016887">
    <property type="term" value="F:ATP hydrolysis activity"/>
    <property type="evidence" value="ECO:0007669"/>
    <property type="project" value="RHEA"/>
</dbReference>
<dbReference type="GO" id="GO:0003677">
    <property type="term" value="F:DNA binding"/>
    <property type="evidence" value="ECO:0007669"/>
    <property type="project" value="UniProtKB-KW"/>
</dbReference>
<dbReference type="GO" id="GO:0003678">
    <property type="term" value="F:DNA helicase activity"/>
    <property type="evidence" value="ECO:0007669"/>
    <property type="project" value="InterPro"/>
</dbReference>
<dbReference type="GO" id="GO:0003917">
    <property type="term" value="F:DNA topoisomerase type I (single strand cut, ATP-independent) activity"/>
    <property type="evidence" value="ECO:0007669"/>
    <property type="project" value="UniProtKB-EC"/>
</dbReference>
<dbReference type="GO" id="GO:0046872">
    <property type="term" value="F:metal ion binding"/>
    <property type="evidence" value="ECO:0007669"/>
    <property type="project" value="UniProtKB-KW"/>
</dbReference>
<dbReference type="CDD" id="cd17933">
    <property type="entry name" value="DEXSc_RecD-like"/>
    <property type="match status" value="1"/>
</dbReference>
<dbReference type="CDD" id="cd18809">
    <property type="entry name" value="SF1_C_RecD"/>
    <property type="match status" value="1"/>
</dbReference>
<dbReference type="Gene3D" id="6.10.140.290">
    <property type="match status" value="1"/>
</dbReference>
<dbReference type="Gene3D" id="6.10.250.110">
    <property type="match status" value="1"/>
</dbReference>
<dbReference type="Gene3D" id="3.40.50.300">
    <property type="entry name" value="P-loop containing nucleotide triphosphate hydrolases"/>
    <property type="match status" value="1"/>
</dbReference>
<dbReference type="InterPro" id="IPR014129">
    <property type="entry name" value="Conjug_relaxase_TraI"/>
</dbReference>
<dbReference type="InterPro" id="IPR009767">
    <property type="entry name" value="DNA_helicase_TraI_C"/>
</dbReference>
<dbReference type="InterPro" id="IPR027417">
    <property type="entry name" value="P-loop_NTPase"/>
</dbReference>
<dbReference type="InterPro" id="IPR014059">
    <property type="entry name" value="TraI/TrwC_relax"/>
</dbReference>
<dbReference type="InterPro" id="IPR040668">
    <property type="entry name" value="TraI_2B"/>
</dbReference>
<dbReference type="InterPro" id="IPR054558">
    <property type="entry name" value="TraI_hel_assoc_DBD_N"/>
</dbReference>
<dbReference type="InterPro" id="IPR040987">
    <property type="entry name" value="TraI_N"/>
</dbReference>
<dbReference type="InterPro" id="IPR014862">
    <property type="entry name" value="TrwC"/>
</dbReference>
<dbReference type="NCBIfam" id="NF041492">
    <property type="entry name" value="MobF"/>
    <property type="match status" value="1"/>
</dbReference>
<dbReference type="NCBIfam" id="NF010263">
    <property type="entry name" value="PRK13709.1"/>
    <property type="match status" value="1"/>
</dbReference>
<dbReference type="NCBIfam" id="NF011300">
    <property type="entry name" value="PRK14712.1"/>
    <property type="match status" value="1"/>
</dbReference>
<dbReference type="NCBIfam" id="TIGR02686">
    <property type="entry name" value="relax_trwC"/>
    <property type="match status" value="1"/>
</dbReference>
<dbReference type="NCBIfam" id="TIGR02760">
    <property type="entry name" value="TraI_TIGR"/>
    <property type="match status" value="1"/>
</dbReference>
<dbReference type="Pfam" id="PF13604">
    <property type="entry name" value="AAA_30"/>
    <property type="match status" value="1"/>
</dbReference>
<dbReference type="Pfam" id="PF18272">
    <property type="entry name" value="ssDNA_TraI_N"/>
    <property type="match status" value="1"/>
</dbReference>
<dbReference type="Pfam" id="PF18340">
    <property type="entry name" value="TraI_2B"/>
    <property type="match status" value="1"/>
</dbReference>
<dbReference type="Pfam" id="PF07057">
    <property type="entry name" value="TraI_C"/>
    <property type="match status" value="1"/>
</dbReference>
<dbReference type="Pfam" id="PF22232">
    <property type="entry name" value="TraI_hel_assoc_N"/>
    <property type="match status" value="1"/>
</dbReference>
<dbReference type="Pfam" id="PF08751">
    <property type="entry name" value="TrwC"/>
    <property type="match status" value="1"/>
</dbReference>
<dbReference type="SUPFAM" id="SSF55464">
    <property type="entry name" value="Origin of replication-binding domain, RBD-like"/>
    <property type="match status" value="1"/>
</dbReference>
<dbReference type="SUPFAM" id="SSF52540">
    <property type="entry name" value="P-loop containing nucleoside triphosphate hydrolases"/>
    <property type="match status" value="2"/>
</dbReference>
<comment type="function">
    <text>Conjugative DNA transfer (CDT) is the unidirectional transfer of ssDNA plasmid from a donor to a recipient cell. It is the central mechanism by which antibiotic resistance and virulence factors are propagated in bacterial populations. Part of the relaxosome, which facilitates a site- and strand-specific cut in the origin of transfer by TraI, at the nic site. Relaxosome formation requires binding of IHF and TraY to the oriT region, which then facilitates binding of TraI relaxase. TraI forms a covalent 5'-phosphotyrosine intermediate linkage to the ssDNA. The transesterified T-strand moves from the donor cell to the recipient cell in a 5'to 3' direction, with the DNA helicase activity of TraI unwinding the DNA. DNA transfer occurs via the conjugative pore (transferosome) an intercellular junction mediated by a type IV secretion system, with TraD providing the means to link the relaxosome to the conjugative pore. The relaxase completes DNA transfer by reversing the covalent phosphotyrosine linkage and releasing the T-strand.</text>
</comment>
<comment type="function">
    <text evidence="1">TraI has also been identified as DNA helicase I. DNA. helicase I is a potent, highly processive DNA-dependent ATPase, able to unwind about 1.1 kb dsDNA per second in a 5' to 3' manner (By similarity).</text>
</comment>
<comment type="catalytic activity">
    <reaction>
        <text>ATP-independent breakage of single-stranded DNA, followed by passage and rejoining.</text>
        <dbReference type="EC" id="5.6.2.1"/>
    </reaction>
</comment>
<comment type="catalytic activity">
    <reaction>
        <text>ATP + H2O = ADP + phosphate + H(+)</text>
        <dbReference type="Rhea" id="RHEA:13065"/>
        <dbReference type="ChEBI" id="CHEBI:15377"/>
        <dbReference type="ChEBI" id="CHEBI:15378"/>
        <dbReference type="ChEBI" id="CHEBI:30616"/>
        <dbReference type="ChEBI" id="CHEBI:43474"/>
        <dbReference type="ChEBI" id="CHEBI:456216"/>
        <dbReference type="EC" id="3.6.4.12"/>
    </reaction>
</comment>
<comment type="cofactor">
    <cofactor evidence="1">
        <name>Mg(2+)</name>
        <dbReference type="ChEBI" id="CHEBI:18420"/>
    </cofactor>
</comment>
<comment type="subunit">
    <text>Monomer. Part of the relaxosome, a complex composed of plasmid-encodes TraI, TraM, TraY and host-encoded IHF bound to the F plasmid origin of transfer (oriT). Directly contacts coupling protein TraD. Seems to directly contact TraM via its C-terminus.</text>
</comment>
<comment type="subcellular location">
    <subcellularLocation>
        <location evidence="1">Cytoplasm</location>
    </subcellularLocation>
</comment>
<comment type="similarity">
    <text evidence="3">To TraI of plasmid F.</text>
</comment>